<sequence>MVNQKIQLICETESAVQFTALCQQKGLIHDPDSYLALVQTKVEGQVRLELRKLDEPKLGAVYVDFVTGTMAHRRKYGGGRGEAVAKAVGIKGNYLPTVIDATAGLGRDAFVLAALGCKVRLVERHPIVHLLLQDGLKRAYADVEIGTMMQANMQLLDIAHIQELNSSEEGADVVYLDPMYPHKQKSALVKKEMRIFQHLIGADLDADMLLEPALLLAQKRAVVKRPDYADFLAKKTPHFSHQTKNHRFDIYLKT</sequence>
<organism>
    <name type="scientific">Histophilus somni (strain 129Pt)</name>
    <name type="common">Haemophilus somnus</name>
    <dbReference type="NCBI Taxonomy" id="205914"/>
    <lineage>
        <taxon>Bacteria</taxon>
        <taxon>Pseudomonadati</taxon>
        <taxon>Pseudomonadota</taxon>
        <taxon>Gammaproteobacteria</taxon>
        <taxon>Pasteurellales</taxon>
        <taxon>Pasteurellaceae</taxon>
        <taxon>Histophilus</taxon>
    </lineage>
</organism>
<reference key="1">
    <citation type="journal article" date="2007" name="J. Bacteriol.">
        <title>Complete genome sequence of Haemophilus somnus (Histophilus somni) strain 129Pt and comparison to Haemophilus ducreyi 35000HP and Haemophilus influenzae Rd.</title>
        <authorList>
            <person name="Challacombe J.F."/>
            <person name="Duncan A.J."/>
            <person name="Brettin T.S."/>
            <person name="Bruce D."/>
            <person name="Chertkov O."/>
            <person name="Detter J.C."/>
            <person name="Han C.S."/>
            <person name="Misra M."/>
            <person name="Richardson P."/>
            <person name="Tapia R."/>
            <person name="Thayer N."/>
            <person name="Xie G."/>
            <person name="Inzana T.J."/>
        </authorList>
    </citation>
    <scope>NUCLEOTIDE SEQUENCE [LARGE SCALE GENOMIC DNA]</scope>
    <source>
        <strain>129Pt</strain>
    </source>
</reference>
<dbReference type="EC" id="2.1.1.242" evidence="1"/>
<dbReference type="EMBL" id="CP000436">
    <property type="protein sequence ID" value="ABI24583.1"/>
    <property type="molecule type" value="Genomic_DNA"/>
</dbReference>
<dbReference type="SMR" id="Q0I1I8"/>
<dbReference type="KEGG" id="hso:HS_0305"/>
<dbReference type="eggNOG" id="COG0742">
    <property type="taxonomic scope" value="Bacteria"/>
</dbReference>
<dbReference type="HOGENOM" id="CLU_076324_0_1_6"/>
<dbReference type="GO" id="GO:0005737">
    <property type="term" value="C:cytoplasm"/>
    <property type="evidence" value="ECO:0007669"/>
    <property type="project" value="UniProtKB-SubCell"/>
</dbReference>
<dbReference type="GO" id="GO:0008990">
    <property type="term" value="F:rRNA (guanine-N2-)-methyltransferase activity"/>
    <property type="evidence" value="ECO:0007669"/>
    <property type="project" value="UniProtKB-UniRule"/>
</dbReference>
<dbReference type="Gene3D" id="3.40.50.150">
    <property type="entry name" value="Vaccinia Virus protein VP39"/>
    <property type="match status" value="1"/>
</dbReference>
<dbReference type="Gene3D" id="3.40.1630.10">
    <property type="entry name" value="YhiQ-like domain"/>
    <property type="match status" value="1"/>
</dbReference>
<dbReference type="HAMAP" id="MF_01523">
    <property type="entry name" value="16SrRNA_methyltr_J"/>
    <property type="match status" value="1"/>
</dbReference>
<dbReference type="InterPro" id="IPR007536">
    <property type="entry name" value="16SrRNA_methylTrfase_J"/>
</dbReference>
<dbReference type="InterPro" id="IPR029063">
    <property type="entry name" value="SAM-dependent_MTases_sf"/>
</dbReference>
<dbReference type="PANTHER" id="PTHR36112">
    <property type="entry name" value="RIBOSOMAL RNA SMALL SUBUNIT METHYLTRANSFERASE J"/>
    <property type="match status" value="1"/>
</dbReference>
<dbReference type="PANTHER" id="PTHR36112:SF1">
    <property type="entry name" value="RIBOSOMAL RNA SMALL SUBUNIT METHYLTRANSFERASE J"/>
    <property type="match status" value="1"/>
</dbReference>
<dbReference type="Pfam" id="PF04445">
    <property type="entry name" value="SAM_MT"/>
    <property type="match status" value="1"/>
</dbReference>
<dbReference type="SUPFAM" id="SSF53335">
    <property type="entry name" value="S-adenosyl-L-methionine-dependent methyltransferases"/>
    <property type="match status" value="1"/>
</dbReference>
<accession>Q0I1I8</accession>
<proteinExistence type="inferred from homology"/>
<feature type="chain" id="PRO_0000292635" description="Ribosomal RNA small subunit methyltransferase J">
    <location>
        <begin position="1"/>
        <end position="254"/>
    </location>
</feature>
<feature type="binding site" evidence="1">
    <location>
        <begin position="107"/>
        <end position="108"/>
    </location>
    <ligand>
        <name>S-adenosyl-L-methionine</name>
        <dbReference type="ChEBI" id="CHEBI:59789"/>
    </ligand>
</feature>
<feature type="binding site" evidence="1">
    <location>
        <begin position="123"/>
        <end position="124"/>
    </location>
    <ligand>
        <name>S-adenosyl-L-methionine</name>
        <dbReference type="ChEBI" id="CHEBI:59789"/>
    </ligand>
</feature>
<feature type="binding site" evidence="1">
    <location>
        <position position="177"/>
    </location>
    <ligand>
        <name>S-adenosyl-L-methionine</name>
        <dbReference type="ChEBI" id="CHEBI:59789"/>
    </ligand>
</feature>
<protein>
    <recommendedName>
        <fullName evidence="1">Ribosomal RNA small subunit methyltransferase J</fullName>
        <ecNumber evidence="1">2.1.1.242</ecNumber>
    </recommendedName>
    <alternativeName>
        <fullName evidence="1">16S rRNA m2G1516 methyltransferase</fullName>
    </alternativeName>
    <alternativeName>
        <fullName evidence="1">rRNA (guanine-N(2)-)-methyltransferase</fullName>
    </alternativeName>
</protein>
<evidence type="ECO:0000255" key="1">
    <source>
        <dbReference type="HAMAP-Rule" id="MF_01523"/>
    </source>
</evidence>
<gene>
    <name evidence="1" type="primary">rsmJ</name>
    <name type="ordered locus">HS_0305</name>
</gene>
<comment type="function">
    <text evidence="1">Specifically methylates the guanosine in position 1516 of 16S rRNA.</text>
</comment>
<comment type="catalytic activity">
    <reaction evidence="1">
        <text>guanosine(1516) in 16S rRNA + S-adenosyl-L-methionine = N(2)-methylguanosine(1516) in 16S rRNA + S-adenosyl-L-homocysteine + H(+)</text>
        <dbReference type="Rhea" id="RHEA:43220"/>
        <dbReference type="Rhea" id="RHEA-COMP:10412"/>
        <dbReference type="Rhea" id="RHEA-COMP:10413"/>
        <dbReference type="ChEBI" id="CHEBI:15378"/>
        <dbReference type="ChEBI" id="CHEBI:57856"/>
        <dbReference type="ChEBI" id="CHEBI:59789"/>
        <dbReference type="ChEBI" id="CHEBI:74269"/>
        <dbReference type="ChEBI" id="CHEBI:74481"/>
        <dbReference type="EC" id="2.1.1.242"/>
    </reaction>
</comment>
<comment type="subcellular location">
    <subcellularLocation>
        <location evidence="1">Cytoplasm</location>
    </subcellularLocation>
</comment>
<comment type="similarity">
    <text evidence="1">Belongs to the methyltransferase superfamily. RsmJ family.</text>
</comment>
<keyword id="KW-0963">Cytoplasm</keyword>
<keyword id="KW-0489">Methyltransferase</keyword>
<keyword id="KW-0698">rRNA processing</keyword>
<keyword id="KW-0949">S-adenosyl-L-methionine</keyword>
<keyword id="KW-0808">Transferase</keyword>
<name>RSMJ_HISS1</name>